<sequence>MKEHKARKRFGQNFLQDTRIIGDIVNAVRPQADDVVIEIGPGLAAITEPLAKKLNRLHVVEIDRDIVCRLKTLPFADKLVIHEGDVLQFDFNGISGKKKIVGNLPYNISTPLLFKLAEVADDVADMHFMLQKEVVERMVAAPKSNDYGRLGVMLQYFFDMELLIDVPPESFDPAPKIDSAVVRMIPVKHRIGKADDFEHFAKLVKLAFRQRRKTIRNNLKELADDDDLQAVGISPQDRAEHIAPEKYVALSNYLADKAV</sequence>
<name>RSMA_NEIG2</name>
<keyword id="KW-0963">Cytoplasm</keyword>
<keyword id="KW-0489">Methyltransferase</keyword>
<keyword id="KW-0694">RNA-binding</keyword>
<keyword id="KW-0698">rRNA processing</keyword>
<keyword id="KW-0949">S-adenosyl-L-methionine</keyword>
<keyword id="KW-0808">Transferase</keyword>
<feature type="chain" id="PRO_1000130300" description="Ribosomal RNA small subunit methyltransferase A">
    <location>
        <begin position="1"/>
        <end position="259"/>
    </location>
</feature>
<feature type="binding site" evidence="1">
    <location>
        <position position="13"/>
    </location>
    <ligand>
        <name>S-adenosyl-L-methionine</name>
        <dbReference type="ChEBI" id="CHEBI:59789"/>
    </ligand>
</feature>
<feature type="binding site" evidence="1">
    <location>
        <position position="15"/>
    </location>
    <ligand>
        <name>S-adenosyl-L-methionine</name>
        <dbReference type="ChEBI" id="CHEBI:59789"/>
    </ligand>
</feature>
<feature type="binding site" evidence="1">
    <location>
        <position position="40"/>
    </location>
    <ligand>
        <name>S-adenosyl-L-methionine</name>
        <dbReference type="ChEBI" id="CHEBI:59789"/>
    </ligand>
</feature>
<feature type="binding site" evidence="1">
    <location>
        <position position="61"/>
    </location>
    <ligand>
        <name>S-adenosyl-L-methionine</name>
        <dbReference type="ChEBI" id="CHEBI:59789"/>
    </ligand>
</feature>
<feature type="binding site" evidence="1">
    <location>
        <position position="85"/>
    </location>
    <ligand>
        <name>S-adenosyl-L-methionine</name>
        <dbReference type="ChEBI" id="CHEBI:59789"/>
    </ligand>
</feature>
<feature type="binding site" evidence="1">
    <location>
        <position position="103"/>
    </location>
    <ligand>
        <name>S-adenosyl-L-methionine</name>
        <dbReference type="ChEBI" id="CHEBI:59789"/>
    </ligand>
</feature>
<comment type="function">
    <text evidence="1">Specifically dimethylates two adjacent adenosines (A1518 and A1519) in the loop of a conserved hairpin near the 3'-end of 16S rRNA in the 30S particle. May play a critical role in biogenesis of 30S subunits.</text>
</comment>
<comment type="catalytic activity">
    <reaction evidence="1">
        <text>adenosine(1518)/adenosine(1519) in 16S rRNA + 4 S-adenosyl-L-methionine = N(6)-dimethyladenosine(1518)/N(6)-dimethyladenosine(1519) in 16S rRNA + 4 S-adenosyl-L-homocysteine + 4 H(+)</text>
        <dbReference type="Rhea" id="RHEA:19609"/>
        <dbReference type="Rhea" id="RHEA-COMP:10232"/>
        <dbReference type="Rhea" id="RHEA-COMP:10233"/>
        <dbReference type="ChEBI" id="CHEBI:15378"/>
        <dbReference type="ChEBI" id="CHEBI:57856"/>
        <dbReference type="ChEBI" id="CHEBI:59789"/>
        <dbReference type="ChEBI" id="CHEBI:74411"/>
        <dbReference type="ChEBI" id="CHEBI:74493"/>
        <dbReference type="EC" id="2.1.1.182"/>
    </reaction>
</comment>
<comment type="subcellular location">
    <subcellularLocation>
        <location evidence="1">Cytoplasm</location>
    </subcellularLocation>
</comment>
<comment type="similarity">
    <text evidence="1">Belongs to the class I-like SAM-binding methyltransferase superfamily. rRNA adenine N(6)-methyltransferase family. RsmA subfamily.</text>
</comment>
<reference key="1">
    <citation type="journal article" date="2008" name="J. Bacteriol.">
        <title>Complete genome sequence of Neisseria gonorrhoeae NCCP11945.</title>
        <authorList>
            <person name="Chung G.T."/>
            <person name="Yoo J.S."/>
            <person name="Oh H.B."/>
            <person name="Lee Y.S."/>
            <person name="Cha S.H."/>
            <person name="Kim S.J."/>
            <person name="Yoo C.K."/>
        </authorList>
    </citation>
    <scope>NUCLEOTIDE SEQUENCE [LARGE SCALE GENOMIC DNA]</scope>
    <source>
        <strain>NCCP11945</strain>
    </source>
</reference>
<dbReference type="EC" id="2.1.1.182" evidence="1"/>
<dbReference type="EMBL" id="CP001050">
    <property type="protein sequence ID" value="ACF29106.1"/>
    <property type="molecule type" value="Genomic_DNA"/>
</dbReference>
<dbReference type="RefSeq" id="WP_003690749.1">
    <property type="nucleotide sequence ID" value="NC_011035.1"/>
</dbReference>
<dbReference type="SMR" id="B4RJV5"/>
<dbReference type="GeneID" id="66752608"/>
<dbReference type="KEGG" id="ngk:NGK_0415"/>
<dbReference type="HOGENOM" id="CLU_041220_0_1_4"/>
<dbReference type="Proteomes" id="UP000002564">
    <property type="component" value="Chromosome"/>
</dbReference>
<dbReference type="GO" id="GO:0005829">
    <property type="term" value="C:cytosol"/>
    <property type="evidence" value="ECO:0007669"/>
    <property type="project" value="TreeGrafter"/>
</dbReference>
<dbReference type="GO" id="GO:0052908">
    <property type="term" value="F:16S rRNA (adenine(1518)-N(6)/adenine(1519)-N(6))-dimethyltransferase activity"/>
    <property type="evidence" value="ECO:0007669"/>
    <property type="project" value="UniProtKB-EC"/>
</dbReference>
<dbReference type="GO" id="GO:0003723">
    <property type="term" value="F:RNA binding"/>
    <property type="evidence" value="ECO:0007669"/>
    <property type="project" value="UniProtKB-KW"/>
</dbReference>
<dbReference type="FunFam" id="1.10.8.100:FF:000001">
    <property type="entry name" value="Ribosomal RNA small subunit methyltransferase A"/>
    <property type="match status" value="1"/>
</dbReference>
<dbReference type="FunFam" id="3.40.50.150:FF:000006">
    <property type="entry name" value="Ribosomal RNA small subunit methyltransferase A"/>
    <property type="match status" value="1"/>
</dbReference>
<dbReference type="Gene3D" id="1.10.8.100">
    <property type="entry name" value="Ribosomal RNA adenine dimethylase-like, domain 2"/>
    <property type="match status" value="1"/>
</dbReference>
<dbReference type="Gene3D" id="3.40.50.150">
    <property type="entry name" value="Vaccinia Virus protein VP39"/>
    <property type="match status" value="1"/>
</dbReference>
<dbReference type="HAMAP" id="MF_00607">
    <property type="entry name" value="16SrRNA_methyltr_A"/>
    <property type="match status" value="1"/>
</dbReference>
<dbReference type="InterPro" id="IPR001737">
    <property type="entry name" value="KsgA/Erm"/>
</dbReference>
<dbReference type="InterPro" id="IPR023165">
    <property type="entry name" value="rRNA_Ade_diMease-like_C"/>
</dbReference>
<dbReference type="InterPro" id="IPR020596">
    <property type="entry name" value="rRNA_Ade_Mease_Trfase_CS"/>
</dbReference>
<dbReference type="InterPro" id="IPR020598">
    <property type="entry name" value="rRNA_Ade_methylase_Trfase_N"/>
</dbReference>
<dbReference type="InterPro" id="IPR011530">
    <property type="entry name" value="rRNA_adenine_dimethylase"/>
</dbReference>
<dbReference type="InterPro" id="IPR029063">
    <property type="entry name" value="SAM-dependent_MTases_sf"/>
</dbReference>
<dbReference type="NCBIfam" id="TIGR00755">
    <property type="entry name" value="ksgA"/>
    <property type="match status" value="1"/>
</dbReference>
<dbReference type="PANTHER" id="PTHR11727">
    <property type="entry name" value="DIMETHYLADENOSINE TRANSFERASE"/>
    <property type="match status" value="1"/>
</dbReference>
<dbReference type="PANTHER" id="PTHR11727:SF7">
    <property type="entry name" value="DIMETHYLADENOSINE TRANSFERASE-RELATED"/>
    <property type="match status" value="1"/>
</dbReference>
<dbReference type="Pfam" id="PF00398">
    <property type="entry name" value="RrnaAD"/>
    <property type="match status" value="1"/>
</dbReference>
<dbReference type="SMART" id="SM00650">
    <property type="entry name" value="rADc"/>
    <property type="match status" value="1"/>
</dbReference>
<dbReference type="SUPFAM" id="SSF53335">
    <property type="entry name" value="S-adenosyl-L-methionine-dependent methyltransferases"/>
    <property type="match status" value="1"/>
</dbReference>
<dbReference type="PROSITE" id="PS01131">
    <property type="entry name" value="RRNA_A_DIMETH"/>
    <property type="match status" value="1"/>
</dbReference>
<dbReference type="PROSITE" id="PS51689">
    <property type="entry name" value="SAM_RNA_A_N6_MT"/>
    <property type="match status" value="1"/>
</dbReference>
<proteinExistence type="inferred from homology"/>
<protein>
    <recommendedName>
        <fullName evidence="1">Ribosomal RNA small subunit methyltransferase A</fullName>
        <ecNumber evidence="1">2.1.1.182</ecNumber>
    </recommendedName>
    <alternativeName>
        <fullName evidence="1">16S rRNA (adenine(1518)-N(6)/adenine(1519)-N(6))-dimethyltransferase</fullName>
    </alternativeName>
    <alternativeName>
        <fullName evidence="1">16S rRNA dimethyladenosine transferase</fullName>
    </alternativeName>
    <alternativeName>
        <fullName evidence="1">16S rRNA dimethylase</fullName>
    </alternativeName>
    <alternativeName>
        <fullName evidence="1">S-adenosylmethionine-6-N', N'-adenosyl(rRNA) dimethyltransferase</fullName>
    </alternativeName>
</protein>
<accession>B4RJV5</accession>
<evidence type="ECO:0000255" key="1">
    <source>
        <dbReference type="HAMAP-Rule" id="MF_00607"/>
    </source>
</evidence>
<organism>
    <name type="scientific">Neisseria gonorrhoeae (strain NCCP11945)</name>
    <dbReference type="NCBI Taxonomy" id="521006"/>
    <lineage>
        <taxon>Bacteria</taxon>
        <taxon>Pseudomonadati</taxon>
        <taxon>Pseudomonadota</taxon>
        <taxon>Betaproteobacteria</taxon>
        <taxon>Neisseriales</taxon>
        <taxon>Neisseriaceae</taxon>
        <taxon>Neisseria</taxon>
    </lineage>
</organism>
<gene>
    <name evidence="1" type="primary">rsmA</name>
    <name evidence="1" type="synonym">ksgA</name>
    <name type="ordered locus">NGK_0415</name>
</gene>